<evidence type="ECO:0000255" key="1">
    <source>
        <dbReference type="HAMAP-Rule" id="MF_01365"/>
    </source>
</evidence>
<evidence type="ECO:0000305" key="2"/>
<sequence>MSRVGNRLLSIPSGVNVEVEKSLVKITGKLGTLSVPFDSKKLSVLNKDSMVIVKRANDEKETKMLHGTTNANINNALIGVNSGHTKKLKIVGVGYKAAVNGNKINLNLGYSHPIDLEIPAGLNVTCPQATEVVITGADKAVVGQFAAVIRSKRPPEPYKGKGVAYSNEVIIRKVGKTAEGSKK</sequence>
<organism>
    <name type="scientific">Malacoplasma penetrans (strain HF-2)</name>
    <name type="common">Mycoplasma penetrans</name>
    <dbReference type="NCBI Taxonomy" id="272633"/>
    <lineage>
        <taxon>Bacteria</taxon>
        <taxon>Bacillati</taxon>
        <taxon>Mycoplasmatota</taxon>
        <taxon>Mycoplasmoidales</taxon>
        <taxon>Mycoplasmoidaceae</taxon>
        <taxon>Malacoplasma</taxon>
    </lineage>
</organism>
<proteinExistence type="inferred from homology"/>
<comment type="function">
    <text evidence="1">This protein binds to the 23S rRNA, and is important in its secondary structure. It is located near the subunit interface in the base of the L7/L12 stalk, and near the tRNA binding site of the peptidyltransferase center.</text>
</comment>
<comment type="subunit">
    <text evidence="1">Part of the 50S ribosomal subunit.</text>
</comment>
<comment type="similarity">
    <text evidence="1">Belongs to the universal ribosomal protein uL6 family.</text>
</comment>
<dbReference type="EMBL" id="BA000026">
    <property type="protein sequence ID" value="BAC44788.1"/>
    <property type="molecule type" value="Genomic_DNA"/>
</dbReference>
<dbReference type="RefSeq" id="WP_011077816.1">
    <property type="nucleotide sequence ID" value="NC_004432.1"/>
</dbReference>
<dbReference type="SMR" id="Q8EUC8"/>
<dbReference type="FunCoup" id="Q8EUC8">
    <property type="interactions" value="261"/>
</dbReference>
<dbReference type="STRING" id="272633.gene:10732122"/>
<dbReference type="KEGG" id="mpe:MYPE10020"/>
<dbReference type="eggNOG" id="COG0097">
    <property type="taxonomic scope" value="Bacteria"/>
</dbReference>
<dbReference type="HOGENOM" id="CLU_065464_1_2_14"/>
<dbReference type="InParanoid" id="Q8EUC8"/>
<dbReference type="Proteomes" id="UP000002522">
    <property type="component" value="Chromosome"/>
</dbReference>
<dbReference type="GO" id="GO:0022625">
    <property type="term" value="C:cytosolic large ribosomal subunit"/>
    <property type="evidence" value="ECO:0007669"/>
    <property type="project" value="TreeGrafter"/>
</dbReference>
<dbReference type="GO" id="GO:0019843">
    <property type="term" value="F:rRNA binding"/>
    <property type="evidence" value="ECO:0007669"/>
    <property type="project" value="UniProtKB-UniRule"/>
</dbReference>
<dbReference type="GO" id="GO:0003735">
    <property type="term" value="F:structural constituent of ribosome"/>
    <property type="evidence" value="ECO:0007669"/>
    <property type="project" value="InterPro"/>
</dbReference>
<dbReference type="GO" id="GO:0002181">
    <property type="term" value="P:cytoplasmic translation"/>
    <property type="evidence" value="ECO:0007669"/>
    <property type="project" value="TreeGrafter"/>
</dbReference>
<dbReference type="FunFam" id="3.90.930.12:FF:000001">
    <property type="entry name" value="50S ribosomal protein L6"/>
    <property type="match status" value="1"/>
</dbReference>
<dbReference type="Gene3D" id="3.90.930.12">
    <property type="entry name" value="Ribosomal protein L6, alpha-beta domain"/>
    <property type="match status" value="2"/>
</dbReference>
<dbReference type="HAMAP" id="MF_01365_B">
    <property type="entry name" value="Ribosomal_uL6_B"/>
    <property type="match status" value="1"/>
</dbReference>
<dbReference type="InterPro" id="IPR000702">
    <property type="entry name" value="Ribosomal_uL6-like"/>
</dbReference>
<dbReference type="InterPro" id="IPR036789">
    <property type="entry name" value="Ribosomal_uL6-like_a/b-dom_sf"/>
</dbReference>
<dbReference type="InterPro" id="IPR020040">
    <property type="entry name" value="Ribosomal_uL6_a/b-dom"/>
</dbReference>
<dbReference type="InterPro" id="IPR019906">
    <property type="entry name" value="Ribosomal_uL6_bac-type"/>
</dbReference>
<dbReference type="InterPro" id="IPR002358">
    <property type="entry name" value="Ribosomal_uL6_CS"/>
</dbReference>
<dbReference type="NCBIfam" id="TIGR03654">
    <property type="entry name" value="L6_bact"/>
    <property type="match status" value="1"/>
</dbReference>
<dbReference type="PANTHER" id="PTHR11655">
    <property type="entry name" value="60S/50S RIBOSOMAL PROTEIN L6/L9"/>
    <property type="match status" value="1"/>
</dbReference>
<dbReference type="PANTHER" id="PTHR11655:SF14">
    <property type="entry name" value="LARGE RIBOSOMAL SUBUNIT PROTEIN UL6M"/>
    <property type="match status" value="1"/>
</dbReference>
<dbReference type="Pfam" id="PF00347">
    <property type="entry name" value="Ribosomal_L6"/>
    <property type="match status" value="2"/>
</dbReference>
<dbReference type="PIRSF" id="PIRSF002162">
    <property type="entry name" value="Ribosomal_L6"/>
    <property type="match status" value="1"/>
</dbReference>
<dbReference type="PRINTS" id="PR00059">
    <property type="entry name" value="RIBOSOMALL6"/>
</dbReference>
<dbReference type="SUPFAM" id="SSF56053">
    <property type="entry name" value="Ribosomal protein L6"/>
    <property type="match status" value="2"/>
</dbReference>
<dbReference type="PROSITE" id="PS00525">
    <property type="entry name" value="RIBOSOMAL_L6_1"/>
    <property type="match status" value="1"/>
</dbReference>
<protein>
    <recommendedName>
        <fullName evidence="1">Large ribosomal subunit protein uL6</fullName>
    </recommendedName>
    <alternativeName>
        <fullName evidence="2">50S ribosomal protein L6</fullName>
    </alternativeName>
</protein>
<accession>Q8EUC8</accession>
<name>RL6_MALP2</name>
<reference key="1">
    <citation type="journal article" date="2002" name="Nucleic Acids Res.">
        <title>The complete genomic sequence of Mycoplasma penetrans, an intracellular bacterial pathogen in humans.</title>
        <authorList>
            <person name="Sasaki Y."/>
            <person name="Ishikawa J."/>
            <person name="Yamashita A."/>
            <person name="Oshima K."/>
            <person name="Kenri T."/>
            <person name="Furuya K."/>
            <person name="Yoshino C."/>
            <person name="Horino A."/>
            <person name="Shiba T."/>
            <person name="Sasaki T."/>
            <person name="Hattori M."/>
        </authorList>
    </citation>
    <scope>NUCLEOTIDE SEQUENCE [LARGE SCALE GENOMIC DNA]</scope>
    <source>
        <strain>HF-2</strain>
    </source>
</reference>
<gene>
    <name evidence="1" type="primary">rplF</name>
    <name type="ordered locus">MYPE10020</name>
</gene>
<keyword id="KW-1185">Reference proteome</keyword>
<keyword id="KW-0687">Ribonucleoprotein</keyword>
<keyword id="KW-0689">Ribosomal protein</keyword>
<keyword id="KW-0694">RNA-binding</keyword>
<keyword id="KW-0699">rRNA-binding</keyword>
<feature type="chain" id="PRO_1000055265" description="Large ribosomal subunit protein uL6">
    <location>
        <begin position="1"/>
        <end position="183"/>
    </location>
</feature>